<sequence>MTSADYASRQRAIIAELNVAPHFDAEAEIARRIDFLAQYLRSTGLRTYVLGISGGVDSSTAGRLAQLSVERLRADGYDARFIAMRLPNGVQNDEEDAQRALAFVRADEVLTVDVKPAADAMLRSLVASGHAFETPAQQDFVHGNIKARERMIAQYAVAGARRGIVIGTDHAAESLMGFFTKFGDGGADILPLAGLSKRRVRGVARALGGEELIVMKVPTADLEELRPLRPDEHAYGVTYDEIDDFLEGKPVADRVYETVLRFYDGSRHKRALPYTMFDWPAA</sequence>
<protein>
    <recommendedName>
        <fullName evidence="1">NH(3)-dependent NAD(+) synthetase</fullName>
        <ecNumber evidence="1">6.3.1.5</ecNumber>
    </recommendedName>
</protein>
<proteinExistence type="inferred from homology"/>
<organism>
    <name type="scientific">Burkholderia cenocepacia (strain HI2424)</name>
    <dbReference type="NCBI Taxonomy" id="331272"/>
    <lineage>
        <taxon>Bacteria</taxon>
        <taxon>Pseudomonadati</taxon>
        <taxon>Pseudomonadota</taxon>
        <taxon>Betaproteobacteria</taxon>
        <taxon>Burkholderiales</taxon>
        <taxon>Burkholderiaceae</taxon>
        <taxon>Burkholderia</taxon>
        <taxon>Burkholderia cepacia complex</taxon>
    </lineage>
</organism>
<reference key="1">
    <citation type="submission" date="2006-08" db="EMBL/GenBank/DDBJ databases">
        <title>Complete sequence of chromosome 2 of Burkholderia cenocepacia HI2424.</title>
        <authorList>
            <person name="Copeland A."/>
            <person name="Lucas S."/>
            <person name="Lapidus A."/>
            <person name="Barry K."/>
            <person name="Detter J.C."/>
            <person name="Glavina del Rio T."/>
            <person name="Hammon N."/>
            <person name="Israni S."/>
            <person name="Pitluck S."/>
            <person name="Chain P."/>
            <person name="Malfatti S."/>
            <person name="Shin M."/>
            <person name="Vergez L."/>
            <person name="Schmutz J."/>
            <person name="Larimer F."/>
            <person name="Land M."/>
            <person name="Hauser L."/>
            <person name="Kyrpides N."/>
            <person name="Kim E."/>
            <person name="LiPuma J.J."/>
            <person name="Gonzalez C.F."/>
            <person name="Konstantinidis K."/>
            <person name="Tiedje J.M."/>
            <person name="Richardson P."/>
        </authorList>
    </citation>
    <scope>NUCLEOTIDE SEQUENCE [LARGE SCALE GENOMIC DNA]</scope>
    <source>
        <strain>HI2424</strain>
    </source>
</reference>
<dbReference type="EC" id="6.3.1.5" evidence="1"/>
<dbReference type="EMBL" id="CP000459">
    <property type="protein sequence ID" value="ABK12011.1"/>
    <property type="molecule type" value="Genomic_DNA"/>
</dbReference>
<dbReference type="RefSeq" id="WP_011546918.1">
    <property type="nucleotide sequence ID" value="NC_008543.1"/>
</dbReference>
<dbReference type="SMR" id="A0B2Y5"/>
<dbReference type="GeneID" id="83051699"/>
<dbReference type="KEGG" id="bch:Bcen2424_5278"/>
<dbReference type="HOGENOM" id="CLU_059327_3_0_4"/>
<dbReference type="UniPathway" id="UPA00253">
    <property type="reaction ID" value="UER00333"/>
</dbReference>
<dbReference type="GO" id="GO:0005737">
    <property type="term" value="C:cytoplasm"/>
    <property type="evidence" value="ECO:0007669"/>
    <property type="project" value="InterPro"/>
</dbReference>
<dbReference type="GO" id="GO:0005524">
    <property type="term" value="F:ATP binding"/>
    <property type="evidence" value="ECO:0007669"/>
    <property type="project" value="UniProtKB-UniRule"/>
</dbReference>
<dbReference type="GO" id="GO:0004359">
    <property type="term" value="F:glutaminase activity"/>
    <property type="evidence" value="ECO:0007669"/>
    <property type="project" value="InterPro"/>
</dbReference>
<dbReference type="GO" id="GO:0046872">
    <property type="term" value="F:metal ion binding"/>
    <property type="evidence" value="ECO:0007669"/>
    <property type="project" value="UniProtKB-KW"/>
</dbReference>
<dbReference type="GO" id="GO:0003952">
    <property type="term" value="F:NAD+ synthase (glutamine-hydrolyzing) activity"/>
    <property type="evidence" value="ECO:0007669"/>
    <property type="project" value="InterPro"/>
</dbReference>
<dbReference type="GO" id="GO:0008795">
    <property type="term" value="F:NAD+ synthase activity"/>
    <property type="evidence" value="ECO:0007669"/>
    <property type="project" value="UniProtKB-UniRule"/>
</dbReference>
<dbReference type="GO" id="GO:0009435">
    <property type="term" value="P:NAD biosynthetic process"/>
    <property type="evidence" value="ECO:0007669"/>
    <property type="project" value="UniProtKB-UniRule"/>
</dbReference>
<dbReference type="CDD" id="cd00553">
    <property type="entry name" value="NAD_synthase"/>
    <property type="match status" value="1"/>
</dbReference>
<dbReference type="Gene3D" id="3.40.50.620">
    <property type="entry name" value="HUPs"/>
    <property type="match status" value="1"/>
</dbReference>
<dbReference type="HAMAP" id="MF_00193">
    <property type="entry name" value="NadE_ammonia_dep"/>
    <property type="match status" value="1"/>
</dbReference>
<dbReference type="InterPro" id="IPR022310">
    <property type="entry name" value="NAD/GMP_synthase"/>
</dbReference>
<dbReference type="InterPro" id="IPR003694">
    <property type="entry name" value="NAD_synthase"/>
</dbReference>
<dbReference type="InterPro" id="IPR022926">
    <property type="entry name" value="NH(3)-dep_NAD(+)_synth"/>
</dbReference>
<dbReference type="InterPro" id="IPR014729">
    <property type="entry name" value="Rossmann-like_a/b/a_fold"/>
</dbReference>
<dbReference type="NCBIfam" id="TIGR00552">
    <property type="entry name" value="nadE"/>
    <property type="match status" value="1"/>
</dbReference>
<dbReference type="NCBIfam" id="NF001979">
    <property type="entry name" value="PRK00768.1"/>
    <property type="match status" value="1"/>
</dbReference>
<dbReference type="PANTHER" id="PTHR23090">
    <property type="entry name" value="NH 3 /GLUTAMINE-DEPENDENT NAD + SYNTHETASE"/>
    <property type="match status" value="1"/>
</dbReference>
<dbReference type="PANTHER" id="PTHR23090:SF7">
    <property type="entry name" value="NH(3)-DEPENDENT NAD(+) SYNTHETASE"/>
    <property type="match status" value="1"/>
</dbReference>
<dbReference type="Pfam" id="PF02540">
    <property type="entry name" value="NAD_synthase"/>
    <property type="match status" value="1"/>
</dbReference>
<dbReference type="SUPFAM" id="SSF52402">
    <property type="entry name" value="Adenine nucleotide alpha hydrolases-like"/>
    <property type="match status" value="1"/>
</dbReference>
<comment type="function">
    <text evidence="1">Catalyzes the ATP-dependent amidation of deamido-NAD to form NAD. Uses ammonia as a nitrogen source.</text>
</comment>
<comment type="catalytic activity">
    <reaction evidence="1">
        <text>deamido-NAD(+) + NH4(+) + ATP = AMP + diphosphate + NAD(+) + H(+)</text>
        <dbReference type="Rhea" id="RHEA:21188"/>
        <dbReference type="ChEBI" id="CHEBI:15378"/>
        <dbReference type="ChEBI" id="CHEBI:28938"/>
        <dbReference type="ChEBI" id="CHEBI:30616"/>
        <dbReference type="ChEBI" id="CHEBI:33019"/>
        <dbReference type="ChEBI" id="CHEBI:57540"/>
        <dbReference type="ChEBI" id="CHEBI:58437"/>
        <dbReference type="ChEBI" id="CHEBI:456215"/>
        <dbReference type="EC" id="6.3.1.5"/>
    </reaction>
</comment>
<comment type="pathway">
    <text evidence="1">Cofactor biosynthesis; NAD(+) biosynthesis; NAD(+) from deamido-NAD(+) (ammonia route): step 1/1.</text>
</comment>
<comment type="subunit">
    <text evidence="1">Homodimer.</text>
</comment>
<comment type="similarity">
    <text evidence="1">Belongs to the NAD synthetase family.</text>
</comment>
<keyword id="KW-0067">ATP-binding</keyword>
<keyword id="KW-0436">Ligase</keyword>
<keyword id="KW-0460">Magnesium</keyword>
<keyword id="KW-0479">Metal-binding</keyword>
<keyword id="KW-0520">NAD</keyword>
<keyword id="KW-0547">Nucleotide-binding</keyword>
<accession>A0B2Y5</accession>
<feature type="chain" id="PRO_1000099004" description="NH(3)-dependent NAD(+) synthetase">
    <location>
        <begin position="1"/>
        <end position="282"/>
    </location>
</feature>
<feature type="binding site" evidence="1">
    <location>
        <begin position="51"/>
        <end position="58"/>
    </location>
    <ligand>
        <name>ATP</name>
        <dbReference type="ChEBI" id="CHEBI:30616"/>
    </ligand>
</feature>
<feature type="binding site" evidence="1">
    <location>
        <position position="57"/>
    </location>
    <ligand>
        <name>Mg(2+)</name>
        <dbReference type="ChEBI" id="CHEBI:18420"/>
    </ligand>
</feature>
<feature type="binding site" evidence="1">
    <location>
        <position position="148"/>
    </location>
    <ligand>
        <name>deamido-NAD(+)</name>
        <dbReference type="ChEBI" id="CHEBI:58437"/>
    </ligand>
</feature>
<feature type="binding site" evidence="1">
    <location>
        <position position="168"/>
    </location>
    <ligand>
        <name>ATP</name>
        <dbReference type="ChEBI" id="CHEBI:30616"/>
    </ligand>
</feature>
<feature type="binding site" evidence="1">
    <location>
        <position position="173"/>
    </location>
    <ligand>
        <name>Mg(2+)</name>
        <dbReference type="ChEBI" id="CHEBI:18420"/>
    </ligand>
</feature>
<feature type="binding site" evidence="1">
    <location>
        <position position="181"/>
    </location>
    <ligand>
        <name>deamido-NAD(+)</name>
        <dbReference type="ChEBI" id="CHEBI:58437"/>
    </ligand>
</feature>
<feature type="binding site" evidence="1">
    <location>
        <position position="188"/>
    </location>
    <ligand>
        <name>deamido-NAD(+)</name>
        <dbReference type="ChEBI" id="CHEBI:58437"/>
    </ligand>
</feature>
<feature type="binding site" evidence="1">
    <location>
        <position position="197"/>
    </location>
    <ligand>
        <name>ATP</name>
        <dbReference type="ChEBI" id="CHEBI:30616"/>
    </ligand>
</feature>
<feature type="binding site" evidence="1">
    <location>
        <position position="219"/>
    </location>
    <ligand>
        <name>ATP</name>
        <dbReference type="ChEBI" id="CHEBI:30616"/>
    </ligand>
</feature>
<feature type="binding site" evidence="1">
    <location>
        <begin position="268"/>
        <end position="269"/>
    </location>
    <ligand>
        <name>deamido-NAD(+)</name>
        <dbReference type="ChEBI" id="CHEBI:58437"/>
    </ligand>
</feature>
<gene>
    <name evidence="1" type="primary">nadE</name>
    <name type="ordered locus">Bcen2424_5278</name>
</gene>
<evidence type="ECO:0000255" key="1">
    <source>
        <dbReference type="HAMAP-Rule" id="MF_00193"/>
    </source>
</evidence>
<name>NADE_BURCH</name>